<dbReference type="EC" id="2.7.7.6" evidence="2"/>
<dbReference type="EMBL" id="AE000666">
    <property type="protein sequence ID" value="AAB85541.1"/>
    <property type="molecule type" value="Genomic_DNA"/>
</dbReference>
<dbReference type="PIR" id="F69006">
    <property type="entry name" value="F69006"/>
</dbReference>
<dbReference type="RefSeq" id="WP_010876676.1">
    <property type="nucleotide sequence ID" value="NC_000916.1"/>
</dbReference>
<dbReference type="SMR" id="O27124"/>
<dbReference type="FunCoup" id="O27124">
    <property type="interactions" value="82"/>
</dbReference>
<dbReference type="STRING" id="187420.MTH_1050"/>
<dbReference type="PaxDb" id="187420-MTH_1050"/>
<dbReference type="EnsemblBacteria" id="AAB85541">
    <property type="protein sequence ID" value="AAB85541"/>
    <property type="gene ID" value="MTH_1050"/>
</dbReference>
<dbReference type="GeneID" id="1471458"/>
<dbReference type="KEGG" id="mth:MTH_1050"/>
<dbReference type="PATRIC" id="fig|187420.15.peg.1029"/>
<dbReference type="HOGENOM" id="CLU_000524_2_2_2"/>
<dbReference type="InParanoid" id="O27124"/>
<dbReference type="Proteomes" id="UP000005223">
    <property type="component" value="Chromosome"/>
</dbReference>
<dbReference type="GO" id="GO:0005737">
    <property type="term" value="C:cytoplasm"/>
    <property type="evidence" value="ECO:0007669"/>
    <property type="project" value="UniProtKB-SubCell"/>
</dbReference>
<dbReference type="GO" id="GO:0000428">
    <property type="term" value="C:DNA-directed RNA polymerase complex"/>
    <property type="evidence" value="ECO:0007669"/>
    <property type="project" value="UniProtKB-KW"/>
</dbReference>
<dbReference type="GO" id="GO:0003677">
    <property type="term" value="F:DNA binding"/>
    <property type="evidence" value="ECO:0007669"/>
    <property type="project" value="UniProtKB-KW"/>
</dbReference>
<dbReference type="GO" id="GO:0003899">
    <property type="term" value="F:DNA-directed RNA polymerase activity"/>
    <property type="evidence" value="ECO:0007669"/>
    <property type="project" value="UniProtKB-EC"/>
</dbReference>
<dbReference type="GO" id="GO:0032549">
    <property type="term" value="F:ribonucleoside binding"/>
    <property type="evidence" value="ECO:0007669"/>
    <property type="project" value="InterPro"/>
</dbReference>
<dbReference type="GO" id="GO:0008270">
    <property type="term" value="F:zinc ion binding"/>
    <property type="evidence" value="ECO:0007669"/>
    <property type="project" value="InterPro"/>
</dbReference>
<dbReference type="GO" id="GO:0006351">
    <property type="term" value="P:DNA-templated transcription"/>
    <property type="evidence" value="ECO:0007669"/>
    <property type="project" value="InterPro"/>
</dbReference>
<dbReference type="CDD" id="cd00653">
    <property type="entry name" value="RNA_pol_B_RPB2"/>
    <property type="match status" value="1"/>
</dbReference>
<dbReference type="FunFam" id="2.40.270.10:FF:000011">
    <property type="entry name" value="DNA-directed RNA polymerase subunit beta"/>
    <property type="match status" value="1"/>
</dbReference>
<dbReference type="FunFam" id="3.90.1800.10:FF:000002">
    <property type="entry name" value="DNA-directed RNA polymerase subunit beta"/>
    <property type="match status" value="1"/>
</dbReference>
<dbReference type="Gene3D" id="2.40.50.150">
    <property type="match status" value="1"/>
</dbReference>
<dbReference type="Gene3D" id="3.90.1070.20">
    <property type="match status" value="1"/>
</dbReference>
<dbReference type="Gene3D" id="2.40.270.10">
    <property type="entry name" value="DNA-directed RNA polymerase, subunit 2, domain 6"/>
    <property type="match status" value="1"/>
</dbReference>
<dbReference type="Gene3D" id="3.90.1800.10">
    <property type="entry name" value="RNA polymerase alpha subunit dimerisation domain"/>
    <property type="match status" value="1"/>
</dbReference>
<dbReference type="InterPro" id="IPR015712">
    <property type="entry name" value="DNA-dir_RNA_pol_su2"/>
</dbReference>
<dbReference type="InterPro" id="IPR007120">
    <property type="entry name" value="DNA-dir_RNAP_su2_dom"/>
</dbReference>
<dbReference type="InterPro" id="IPR037033">
    <property type="entry name" value="DNA-dir_RNAP_su2_hyb_sf"/>
</dbReference>
<dbReference type="InterPro" id="IPR007121">
    <property type="entry name" value="RNA_pol_bsu_CS"/>
</dbReference>
<dbReference type="InterPro" id="IPR007646">
    <property type="entry name" value="RNA_pol_Rpb2_4"/>
</dbReference>
<dbReference type="InterPro" id="IPR007647">
    <property type="entry name" value="RNA_pol_Rpb2_5"/>
</dbReference>
<dbReference type="InterPro" id="IPR007641">
    <property type="entry name" value="RNA_pol_Rpb2_7"/>
</dbReference>
<dbReference type="InterPro" id="IPR014724">
    <property type="entry name" value="RNA_pol_RPB2_OB-fold"/>
</dbReference>
<dbReference type="InterPro" id="IPR019969">
    <property type="entry name" value="RNAP_Rpo2"/>
</dbReference>
<dbReference type="NCBIfam" id="TIGR03670">
    <property type="entry name" value="rpoB_arch"/>
    <property type="match status" value="1"/>
</dbReference>
<dbReference type="PANTHER" id="PTHR20856">
    <property type="entry name" value="DNA-DIRECTED RNA POLYMERASE I SUBUNIT 2"/>
    <property type="match status" value="1"/>
</dbReference>
<dbReference type="Pfam" id="PF04566">
    <property type="entry name" value="RNA_pol_Rpb2_4"/>
    <property type="match status" value="1"/>
</dbReference>
<dbReference type="Pfam" id="PF04567">
    <property type="entry name" value="RNA_pol_Rpb2_5"/>
    <property type="match status" value="1"/>
</dbReference>
<dbReference type="Pfam" id="PF00562">
    <property type="entry name" value="RNA_pol_Rpb2_6"/>
    <property type="match status" value="1"/>
</dbReference>
<dbReference type="Pfam" id="PF04560">
    <property type="entry name" value="RNA_pol_Rpb2_7"/>
    <property type="match status" value="1"/>
</dbReference>
<dbReference type="SUPFAM" id="SSF64484">
    <property type="entry name" value="beta and beta-prime subunits of DNA dependent RNA-polymerase"/>
    <property type="match status" value="1"/>
</dbReference>
<dbReference type="PROSITE" id="PS01166">
    <property type="entry name" value="RNA_POL_BETA"/>
    <property type="match status" value="1"/>
</dbReference>
<feature type="chain" id="PRO_0000048103" description="DNA-directed RNA polymerase subunit Rpo2C">
    <location>
        <begin position="1"/>
        <end position="603"/>
    </location>
</feature>
<feature type="binding site" evidence="1">
    <location>
        <position position="546"/>
    </location>
    <ligand>
        <name>Zn(2+)</name>
        <dbReference type="ChEBI" id="CHEBI:29105"/>
    </ligand>
</feature>
<feature type="binding site" evidence="1">
    <location>
        <position position="549"/>
    </location>
    <ligand>
        <name>Zn(2+)</name>
        <dbReference type="ChEBI" id="CHEBI:29105"/>
    </ligand>
</feature>
<feature type="binding site" evidence="1">
    <location>
        <position position="564"/>
    </location>
    <ligand>
        <name>Zn(2+)</name>
        <dbReference type="ChEBI" id="CHEBI:29105"/>
    </ligand>
</feature>
<feature type="binding site" evidence="4">
    <location>
        <position position="567"/>
    </location>
    <ligand>
        <name>Zn(2+)</name>
        <dbReference type="ChEBI" id="CHEBI:29105"/>
    </ligand>
</feature>
<sequence>MSKTKIYINGKLIGTCENPEEFVEEMRKKRRSGEVSPEMNITHYPENHEIYIFTDPGRARRPLIIVEDGEPLLTEEHLEKLETGEMSWDDLIAAGIIEYLDAEEEENAYIAMSPDEINDEHTHLEIDPSTMLGICAGIIPFANHNSSPRNTMEAGMTKQALGLYASNYDLRTDTRAHLLHHPQVPIVKTRIIDVTGYDERPSGQNFVVAVMSYEGYNMEDALILNKASLERGLARSSFFRSYEAAERRYPGGQEDRFEIPEKGVRGYRSESDYRHLDEDGIINPEAEVSSGDVLIGKTSPPRFLEEIDEFGTVAERRRETSVTVRHGEKGIVDAVLLTETVEGSRLAKIRVREQRQPELGDKFASRHGQKGVVGLIVSQEDMPFTEDGIVPDLIVNPHAIPSRMSVGQVLEMLAGKAACMEGRRVDGTPFTGEDEDDIKEALRANGFETAGVESLYNGITGERIEAEIFIGVAYYQKLHHMTTDKVYARSRGPVQVLTRQPTEGRAREGGLRFGEMERDCLIAHGAALALKERLLDESDKYEALVCADCGMIAVYDKIRDKKYCPICEDSESFPVEVSYAFKLLLDELKSLCIFPKLILEDKA</sequence>
<proteinExistence type="inferred from homology"/>
<name>RPO2C_METTH</name>
<protein>
    <recommendedName>
        <fullName evidence="4">DNA-directed RNA polymerase subunit Rpo2C</fullName>
        <ecNumber evidence="2">2.7.7.6</ecNumber>
    </recommendedName>
    <alternativeName>
        <fullName evidence="3">DNA-directed RNA polymerase subunit B'</fullName>
    </alternativeName>
</protein>
<keyword id="KW-0963">Cytoplasm</keyword>
<keyword id="KW-0238">DNA-binding</keyword>
<keyword id="KW-0240">DNA-directed RNA polymerase</keyword>
<keyword id="KW-0479">Metal-binding</keyword>
<keyword id="KW-0548">Nucleotidyltransferase</keyword>
<keyword id="KW-1185">Reference proteome</keyword>
<keyword id="KW-0804">Transcription</keyword>
<keyword id="KW-0808">Transferase</keyword>
<keyword id="KW-0862">Zinc</keyword>
<gene>
    <name evidence="4" type="primary">rpo2C</name>
    <name type="synonym">rpoB1</name>
    <name type="ordered locus">MTH_1050</name>
</gene>
<evidence type="ECO:0000250" key="1">
    <source>
        <dbReference type="UniProtKB" id="B8YB55"/>
    </source>
</evidence>
<evidence type="ECO:0000250" key="2">
    <source>
        <dbReference type="UniProtKB" id="P11513"/>
    </source>
</evidence>
<evidence type="ECO:0000303" key="3">
    <source>
    </source>
</evidence>
<evidence type="ECO:0000305" key="4"/>
<organism>
    <name type="scientific">Methanothermobacter thermautotrophicus (strain ATCC 29096 / DSM 1053 / JCM 10044 / NBRC 100330 / Delta H)</name>
    <name type="common">Methanobacterium thermoautotrophicum</name>
    <dbReference type="NCBI Taxonomy" id="187420"/>
    <lineage>
        <taxon>Archaea</taxon>
        <taxon>Methanobacteriati</taxon>
        <taxon>Methanobacteriota</taxon>
        <taxon>Methanomada group</taxon>
        <taxon>Methanobacteria</taxon>
        <taxon>Methanobacteriales</taxon>
        <taxon>Methanobacteriaceae</taxon>
        <taxon>Methanothermobacter</taxon>
    </lineage>
</organism>
<reference key="1">
    <citation type="journal article" date="1997" name="J. Bacteriol.">
        <title>Complete genome sequence of Methanobacterium thermoautotrophicum deltaH: functional analysis and comparative genomics.</title>
        <authorList>
            <person name="Smith D.R."/>
            <person name="Doucette-Stamm L.A."/>
            <person name="Deloughery C."/>
            <person name="Lee H.-M."/>
            <person name="Dubois J."/>
            <person name="Aldredge T."/>
            <person name="Bashirzadeh R."/>
            <person name="Blakely D."/>
            <person name="Cook R."/>
            <person name="Gilbert K."/>
            <person name="Harrison D."/>
            <person name="Hoang L."/>
            <person name="Keagle P."/>
            <person name="Lumm W."/>
            <person name="Pothier B."/>
            <person name="Qiu D."/>
            <person name="Spadafora R."/>
            <person name="Vicare R."/>
            <person name="Wang Y."/>
            <person name="Wierzbowski J."/>
            <person name="Gibson R."/>
            <person name="Jiwani N."/>
            <person name="Caruso A."/>
            <person name="Bush D."/>
            <person name="Safer H."/>
            <person name="Patwell D."/>
            <person name="Prabhakar S."/>
            <person name="McDougall S."/>
            <person name="Shimer G."/>
            <person name="Goyal A."/>
            <person name="Pietrovski S."/>
            <person name="Church G.M."/>
            <person name="Daniels C.J."/>
            <person name="Mao J.-I."/>
            <person name="Rice P."/>
            <person name="Noelling J."/>
            <person name="Reeve J.N."/>
        </authorList>
    </citation>
    <scope>NUCLEOTIDE SEQUENCE [LARGE SCALE GENOMIC DNA]</scope>
    <source>
        <strain>ATCC 29096 / DSM 1053 / JCM 10044 / NBRC 100330 / Delta H</strain>
    </source>
</reference>
<comment type="function">
    <text evidence="1">DNA-dependent RNA polymerase (RNAP) catalyzes the transcription of DNA into RNA using the four ribonucleoside triphosphates as substrates. The Rpo2 subunit (Rpo2N and Rpo2C in this organism) is implicated in DNA promoter recognition and in nucleotide binding.</text>
</comment>
<comment type="catalytic activity">
    <reaction evidence="2">
        <text>RNA(n) + a ribonucleoside 5'-triphosphate = RNA(n+1) + diphosphate</text>
        <dbReference type="Rhea" id="RHEA:21248"/>
        <dbReference type="Rhea" id="RHEA-COMP:14527"/>
        <dbReference type="Rhea" id="RHEA-COMP:17342"/>
        <dbReference type="ChEBI" id="CHEBI:33019"/>
        <dbReference type="ChEBI" id="CHEBI:61557"/>
        <dbReference type="ChEBI" id="CHEBI:140395"/>
        <dbReference type="EC" id="2.7.7.6"/>
    </reaction>
</comment>
<comment type="cofactor">
    <cofactor evidence="1">
        <name>Zn(2+)</name>
        <dbReference type="ChEBI" id="CHEBI:29105"/>
    </cofactor>
    <text evidence="1">Binds 1 Zn(2+) per subunit.</text>
</comment>
<comment type="subunit">
    <text evidence="1">Part of the RNA polymerase complex.</text>
</comment>
<comment type="subcellular location">
    <subcellularLocation>
        <location evidence="1">Cytoplasm</location>
    </subcellularLocation>
</comment>
<comment type="similarity">
    <text evidence="4">Belongs to the RNA polymerase beta chain family.</text>
</comment>
<accession>O27124</accession>